<proteinExistence type="evidence at protein level"/>
<sequence>MSEQQRQGAERDLYRDTWVRYLGYANEVGEAFRSLVPAAVVWLSYGVSSSYVLADAIDKGKKAGEVPSPEAGRNTRMALAVVDTFVWQSLASVAIPGFTINRLCAASLYVLGTMTHWPPTVRKWTTTTLGLLAIPVIIHPIDRSVDFLLDSSLRKLYPSVEKPSTP</sequence>
<protein>
    <recommendedName>
        <fullName>Mitochondrial fission process protein 1</fullName>
    </recommendedName>
    <alternativeName>
        <fullName>Mitochondrial 18 kDa protein</fullName>
        <shortName>MTP18</shortName>
    </alternativeName>
</protein>
<name>MTFP1_MOUSE</name>
<organism>
    <name type="scientific">Mus musculus</name>
    <name type="common">Mouse</name>
    <dbReference type="NCBI Taxonomy" id="10090"/>
    <lineage>
        <taxon>Eukaryota</taxon>
        <taxon>Metazoa</taxon>
        <taxon>Chordata</taxon>
        <taxon>Craniata</taxon>
        <taxon>Vertebrata</taxon>
        <taxon>Euteleostomi</taxon>
        <taxon>Mammalia</taxon>
        <taxon>Eutheria</taxon>
        <taxon>Euarchontoglires</taxon>
        <taxon>Glires</taxon>
        <taxon>Rodentia</taxon>
        <taxon>Myomorpha</taxon>
        <taxon>Muroidea</taxon>
        <taxon>Muridae</taxon>
        <taxon>Murinae</taxon>
        <taxon>Mus</taxon>
        <taxon>Mus</taxon>
    </lineage>
</organism>
<gene>
    <name type="primary">Mtfp1</name>
    <name type="synonym">Mtp18</name>
</gene>
<dbReference type="EMBL" id="AK006148">
    <property type="protein sequence ID" value="BAB24432.1"/>
    <property type="molecule type" value="mRNA"/>
</dbReference>
<dbReference type="EMBL" id="AK010971">
    <property type="protein sequence ID" value="BAB27300.1"/>
    <property type="molecule type" value="mRNA"/>
</dbReference>
<dbReference type="EMBL" id="AK012058">
    <property type="protein sequence ID" value="BAB27999.1"/>
    <property type="molecule type" value="mRNA"/>
</dbReference>
<dbReference type="EMBL" id="AK078381">
    <property type="protein sequence ID" value="BAC37244.1"/>
    <property type="molecule type" value="mRNA"/>
</dbReference>
<dbReference type="EMBL" id="BC058737">
    <property type="protein sequence ID" value="AAH58737.1"/>
    <property type="molecule type" value="mRNA"/>
</dbReference>
<dbReference type="CCDS" id="CCDS24376.1"/>
<dbReference type="RefSeq" id="NP_080719.2">
    <property type="nucleotide sequence ID" value="NM_026443.4"/>
</dbReference>
<dbReference type="BioGRID" id="212524">
    <property type="interactions" value="1"/>
</dbReference>
<dbReference type="FunCoup" id="Q9CRB8">
    <property type="interactions" value="889"/>
</dbReference>
<dbReference type="IntAct" id="Q9CRB8">
    <property type="interactions" value="1"/>
</dbReference>
<dbReference type="STRING" id="10090.ENSMUSP00000004868"/>
<dbReference type="PhosphoSitePlus" id="Q9CRB8"/>
<dbReference type="SwissPalm" id="Q9CRB8"/>
<dbReference type="jPOST" id="Q9CRB8"/>
<dbReference type="PaxDb" id="10090-ENSMUSP00000004868"/>
<dbReference type="ProteomicsDB" id="291433"/>
<dbReference type="Antibodypedia" id="34826">
    <property type="antibodies" value="104 antibodies from 21 providers"/>
</dbReference>
<dbReference type="DNASU" id="67900"/>
<dbReference type="Ensembl" id="ENSMUST00000004868.6">
    <property type="protein sequence ID" value="ENSMUSP00000004868.6"/>
    <property type="gene ID" value="ENSMUSG00000004748.6"/>
</dbReference>
<dbReference type="GeneID" id="67900"/>
<dbReference type="KEGG" id="mmu:67900"/>
<dbReference type="UCSC" id="uc007hug.1">
    <property type="organism name" value="mouse"/>
</dbReference>
<dbReference type="AGR" id="MGI:1916686"/>
<dbReference type="CTD" id="51537"/>
<dbReference type="MGI" id="MGI:1916686">
    <property type="gene designation" value="Mtfp1"/>
</dbReference>
<dbReference type="VEuPathDB" id="HostDB:ENSMUSG00000004748"/>
<dbReference type="eggNOG" id="KOG3945">
    <property type="taxonomic scope" value="Eukaryota"/>
</dbReference>
<dbReference type="GeneTree" id="ENSGT00390000004019"/>
<dbReference type="HOGENOM" id="CLU_053720_1_0_1"/>
<dbReference type="InParanoid" id="Q9CRB8"/>
<dbReference type="OMA" id="DVFTWQM"/>
<dbReference type="OrthoDB" id="424969at2759"/>
<dbReference type="PhylomeDB" id="Q9CRB8"/>
<dbReference type="TreeFam" id="TF324605"/>
<dbReference type="BioGRID-ORCS" id="67900">
    <property type="hits" value="3 hits in 78 CRISPR screens"/>
</dbReference>
<dbReference type="CD-CODE" id="CE726F99">
    <property type="entry name" value="Postsynaptic density"/>
</dbReference>
<dbReference type="ChiTaRS" id="Mtfp1">
    <property type="organism name" value="mouse"/>
</dbReference>
<dbReference type="PRO" id="PR:Q9CRB8"/>
<dbReference type="Proteomes" id="UP000000589">
    <property type="component" value="Chromosome 11"/>
</dbReference>
<dbReference type="RNAct" id="Q9CRB8">
    <property type="molecule type" value="protein"/>
</dbReference>
<dbReference type="Bgee" id="ENSMUSG00000004748">
    <property type="expression patterns" value="Expressed in interventricular septum and 230 other cell types or tissues"/>
</dbReference>
<dbReference type="GO" id="GO:0005743">
    <property type="term" value="C:mitochondrial inner membrane"/>
    <property type="evidence" value="ECO:0000250"/>
    <property type="project" value="UniProtKB"/>
</dbReference>
<dbReference type="GO" id="GO:0005739">
    <property type="term" value="C:mitochondrion"/>
    <property type="evidence" value="ECO:0007005"/>
    <property type="project" value="MGI"/>
</dbReference>
<dbReference type="GO" id="GO:0006915">
    <property type="term" value="P:apoptotic process"/>
    <property type="evidence" value="ECO:0000315"/>
    <property type="project" value="MGI"/>
</dbReference>
<dbReference type="GO" id="GO:0000266">
    <property type="term" value="P:mitochondrial fission"/>
    <property type="evidence" value="ECO:0000250"/>
    <property type="project" value="UniProtKB"/>
</dbReference>
<dbReference type="GO" id="GO:0007006">
    <property type="term" value="P:mitochondrial membrane organization"/>
    <property type="evidence" value="ECO:0000247"/>
    <property type="project" value="MGI"/>
</dbReference>
<dbReference type="GO" id="GO:0007005">
    <property type="term" value="P:mitochondrion organization"/>
    <property type="evidence" value="ECO:0000315"/>
    <property type="project" value="MGI"/>
</dbReference>
<dbReference type="InterPro" id="IPR019560">
    <property type="entry name" value="Mitochondrial_18_kDa_protein"/>
</dbReference>
<dbReference type="PANTHER" id="PTHR11001">
    <property type="entry name" value="MITOCHONDRIAL FISSION PROCESS PROTEIN 1"/>
    <property type="match status" value="1"/>
</dbReference>
<dbReference type="PANTHER" id="PTHR11001:SF2">
    <property type="entry name" value="MITOCHONDRIAL FISSION PROCESS PROTEIN 1"/>
    <property type="match status" value="1"/>
</dbReference>
<dbReference type="Pfam" id="PF10558">
    <property type="entry name" value="MTP18"/>
    <property type="match status" value="2"/>
</dbReference>
<accession>Q9CRB8</accession>
<accession>Q9CZX4</accession>
<reference key="1">
    <citation type="journal article" date="2005" name="Science">
        <title>The transcriptional landscape of the mammalian genome.</title>
        <authorList>
            <person name="Carninci P."/>
            <person name="Kasukawa T."/>
            <person name="Katayama S."/>
            <person name="Gough J."/>
            <person name="Frith M.C."/>
            <person name="Maeda N."/>
            <person name="Oyama R."/>
            <person name="Ravasi T."/>
            <person name="Lenhard B."/>
            <person name="Wells C."/>
            <person name="Kodzius R."/>
            <person name="Shimokawa K."/>
            <person name="Bajic V.B."/>
            <person name="Brenner S.E."/>
            <person name="Batalov S."/>
            <person name="Forrest A.R."/>
            <person name="Zavolan M."/>
            <person name="Davis M.J."/>
            <person name="Wilming L.G."/>
            <person name="Aidinis V."/>
            <person name="Allen J.E."/>
            <person name="Ambesi-Impiombato A."/>
            <person name="Apweiler R."/>
            <person name="Aturaliya R.N."/>
            <person name="Bailey T.L."/>
            <person name="Bansal M."/>
            <person name="Baxter L."/>
            <person name="Beisel K.W."/>
            <person name="Bersano T."/>
            <person name="Bono H."/>
            <person name="Chalk A.M."/>
            <person name="Chiu K.P."/>
            <person name="Choudhary V."/>
            <person name="Christoffels A."/>
            <person name="Clutterbuck D.R."/>
            <person name="Crowe M.L."/>
            <person name="Dalla E."/>
            <person name="Dalrymple B.P."/>
            <person name="de Bono B."/>
            <person name="Della Gatta G."/>
            <person name="di Bernardo D."/>
            <person name="Down T."/>
            <person name="Engstrom P."/>
            <person name="Fagiolini M."/>
            <person name="Faulkner G."/>
            <person name="Fletcher C.F."/>
            <person name="Fukushima T."/>
            <person name="Furuno M."/>
            <person name="Futaki S."/>
            <person name="Gariboldi M."/>
            <person name="Georgii-Hemming P."/>
            <person name="Gingeras T.R."/>
            <person name="Gojobori T."/>
            <person name="Green R.E."/>
            <person name="Gustincich S."/>
            <person name="Harbers M."/>
            <person name="Hayashi Y."/>
            <person name="Hensch T.K."/>
            <person name="Hirokawa N."/>
            <person name="Hill D."/>
            <person name="Huminiecki L."/>
            <person name="Iacono M."/>
            <person name="Ikeo K."/>
            <person name="Iwama A."/>
            <person name="Ishikawa T."/>
            <person name="Jakt M."/>
            <person name="Kanapin A."/>
            <person name="Katoh M."/>
            <person name="Kawasawa Y."/>
            <person name="Kelso J."/>
            <person name="Kitamura H."/>
            <person name="Kitano H."/>
            <person name="Kollias G."/>
            <person name="Krishnan S.P."/>
            <person name="Kruger A."/>
            <person name="Kummerfeld S.K."/>
            <person name="Kurochkin I.V."/>
            <person name="Lareau L.F."/>
            <person name="Lazarevic D."/>
            <person name="Lipovich L."/>
            <person name="Liu J."/>
            <person name="Liuni S."/>
            <person name="McWilliam S."/>
            <person name="Madan Babu M."/>
            <person name="Madera M."/>
            <person name="Marchionni L."/>
            <person name="Matsuda H."/>
            <person name="Matsuzawa S."/>
            <person name="Miki H."/>
            <person name="Mignone F."/>
            <person name="Miyake S."/>
            <person name="Morris K."/>
            <person name="Mottagui-Tabar S."/>
            <person name="Mulder N."/>
            <person name="Nakano N."/>
            <person name="Nakauchi H."/>
            <person name="Ng P."/>
            <person name="Nilsson R."/>
            <person name="Nishiguchi S."/>
            <person name="Nishikawa S."/>
            <person name="Nori F."/>
            <person name="Ohara O."/>
            <person name="Okazaki Y."/>
            <person name="Orlando V."/>
            <person name="Pang K.C."/>
            <person name="Pavan W.J."/>
            <person name="Pavesi G."/>
            <person name="Pesole G."/>
            <person name="Petrovsky N."/>
            <person name="Piazza S."/>
            <person name="Reed J."/>
            <person name="Reid J.F."/>
            <person name="Ring B.Z."/>
            <person name="Ringwald M."/>
            <person name="Rost B."/>
            <person name="Ruan Y."/>
            <person name="Salzberg S.L."/>
            <person name="Sandelin A."/>
            <person name="Schneider C."/>
            <person name="Schoenbach C."/>
            <person name="Sekiguchi K."/>
            <person name="Semple C.A."/>
            <person name="Seno S."/>
            <person name="Sessa L."/>
            <person name="Sheng Y."/>
            <person name="Shibata Y."/>
            <person name="Shimada H."/>
            <person name="Shimada K."/>
            <person name="Silva D."/>
            <person name="Sinclair B."/>
            <person name="Sperling S."/>
            <person name="Stupka E."/>
            <person name="Sugiura K."/>
            <person name="Sultana R."/>
            <person name="Takenaka Y."/>
            <person name="Taki K."/>
            <person name="Tammoja K."/>
            <person name="Tan S.L."/>
            <person name="Tang S."/>
            <person name="Taylor M.S."/>
            <person name="Tegner J."/>
            <person name="Teichmann S.A."/>
            <person name="Ueda H.R."/>
            <person name="van Nimwegen E."/>
            <person name="Verardo R."/>
            <person name="Wei C.L."/>
            <person name="Yagi K."/>
            <person name="Yamanishi H."/>
            <person name="Zabarovsky E."/>
            <person name="Zhu S."/>
            <person name="Zimmer A."/>
            <person name="Hide W."/>
            <person name="Bult C."/>
            <person name="Grimmond S.M."/>
            <person name="Teasdale R.D."/>
            <person name="Liu E.T."/>
            <person name="Brusic V."/>
            <person name="Quackenbush J."/>
            <person name="Wahlestedt C."/>
            <person name="Mattick J.S."/>
            <person name="Hume D.A."/>
            <person name="Kai C."/>
            <person name="Sasaki D."/>
            <person name="Tomaru Y."/>
            <person name="Fukuda S."/>
            <person name="Kanamori-Katayama M."/>
            <person name="Suzuki M."/>
            <person name="Aoki J."/>
            <person name="Arakawa T."/>
            <person name="Iida J."/>
            <person name="Imamura K."/>
            <person name="Itoh M."/>
            <person name="Kato T."/>
            <person name="Kawaji H."/>
            <person name="Kawagashira N."/>
            <person name="Kawashima T."/>
            <person name="Kojima M."/>
            <person name="Kondo S."/>
            <person name="Konno H."/>
            <person name="Nakano K."/>
            <person name="Ninomiya N."/>
            <person name="Nishio T."/>
            <person name="Okada M."/>
            <person name="Plessy C."/>
            <person name="Shibata K."/>
            <person name="Shiraki T."/>
            <person name="Suzuki S."/>
            <person name="Tagami M."/>
            <person name="Waki K."/>
            <person name="Watahiki A."/>
            <person name="Okamura-Oho Y."/>
            <person name="Suzuki H."/>
            <person name="Kawai J."/>
            <person name="Hayashizaki Y."/>
        </authorList>
    </citation>
    <scope>NUCLEOTIDE SEQUENCE [LARGE SCALE MRNA]</scope>
    <source>
        <strain>C57BL/6J</strain>
        <tissue>Cerebellum</tissue>
        <tissue>Liver</tissue>
        <tissue>Testis</tissue>
    </source>
</reference>
<reference key="2">
    <citation type="journal article" date="2004" name="Genome Res.">
        <title>The status, quality, and expansion of the NIH full-length cDNA project: the Mammalian Gene Collection (MGC).</title>
        <authorList>
            <consortium name="The MGC Project Team"/>
        </authorList>
    </citation>
    <scope>NUCLEOTIDE SEQUENCE [LARGE SCALE MRNA]</scope>
    <source>
        <strain>C57BL/6J</strain>
        <tissue>Retina</tissue>
    </source>
</reference>
<reference key="3">
    <citation type="submission" date="2007-04" db="UniProtKB">
        <authorList>
            <person name="Lubec G."/>
            <person name="Kang S.U."/>
        </authorList>
    </citation>
    <scope>PROTEIN SEQUENCE OF 63-73</scope>
    <scope>IDENTIFICATION BY MASS SPECTROMETRY</scope>
    <source>
        <strain>C57BL/6J</strain>
        <tissue>Brain</tissue>
    </source>
</reference>
<reference key="4">
    <citation type="journal article" date="2010" name="Cell">
        <title>A tissue-specific atlas of mouse protein phosphorylation and expression.</title>
        <authorList>
            <person name="Huttlin E.L."/>
            <person name="Jedrychowski M.P."/>
            <person name="Elias J.E."/>
            <person name="Goswami T."/>
            <person name="Rad R."/>
            <person name="Beausoleil S.A."/>
            <person name="Villen J."/>
            <person name="Haas W."/>
            <person name="Sowa M.E."/>
            <person name="Gygi S.P."/>
        </authorList>
    </citation>
    <scope>IDENTIFICATION BY MASS SPECTROMETRY [LARGE SCALE ANALYSIS]</scope>
    <source>
        <tissue>Brain</tissue>
        <tissue>Brown adipose tissue</tissue>
        <tissue>Heart</tissue>
        <tissue>Kidney</tissue>
        <tissue>Liver</tissue>
        <tissue>Spleen</tissue>
        <tissue>Testis</tissue>
    </source>
</reference>
<reference key="5">
    <citation type="journal article" date="2013" name="Mol. Cell">
        <title>SIRT5-mediated lysine desuccinylation impacts diverse metabolic pathways.</title>
        <authorList>
            <person name="Park J."/>
            <person name="Chen Y."/>
            <person name="Tishkoff D.X."/>
            <person name="Peng C."/>
            <person name="Tan M."/>
            <person name="Dai L."/>
            <person name="Xie Z."/>
            <person name="Zhang Y."/>
            <person name="Zwaans B.M."/>
            <person name="Skinner M.E."/>
            <person name="Lombard D.B."/>
            <person name="Zhao Y."/>
        </authorList>
    </citation>
    <scope>SUCCINYLATION [LARGE SCALE ANALYSIS] AT LYS-123</scope>
    <scope>IDENTIFICATION BY MASS SPECTROMETRY [LARGE SCALE ANALYSIS]</scope>
    <source>
        <tissue>Liver</tissue>
    </source>
</reference>
<keyword id="KW-0053">Apoptosis</keyword>
<keyword id="KW-0903">Direct protein sequencing</keyword>
<keyword id="KW-0472">Membrane</keyword>
<keyword id="KW-0496">Mitochondrion</keyword>
<keyword id="KW-0999">Mitochondrion inner membrane</keyword>
<keyword id="KW-1185">Reference proteome</keyword>
<keyword id="KW-0812">Transmembrane</keyword>
<keyword id="KW-1133">Transmembrane helix</keyword>
<feature type="chain" id="PRO_0000212412" description="Mitochondrial fission process protein 1">
    <location>
        <begin position="1"/>
        <end position="166"/>
    </location>
</feature>
<feature type="transmembrane region" description="Helical" evidence="2">
    <location>
        <begin position="34"/>
        <end position="54"/>
    </location>
</feature>
<feature type="transmembrane region" description="Helical" evidence="2">
    <location>
        <begin position="78"/>
        <end position="98"/>
    </location>
</feature>
<feature type="transmembrane region" description="Helical" evidence="2">
    <location>
        <begin position="129"/>
        <end position="149"/>
    </location>
</feature>
<feature type="modified residue" description="N6-succinyllysine" evidence="4">
    <location>
        <position position="123"/>
    </location>
</feature>
<feature type="sequence conflict" description="In Ref. 1; BAB27999." evidence="3" ref="1">
    <original>S</original>
    <variation>N</variation>
    <location>
        <position position="152"/>
    </location>
</feature>
<comment type="function">
    <text evidence="1">Involved in the mitochondrial division probably by regulating membrane fission. Loss-of-function leads to apoptosis (By similarity).</text>
</comment>
<comment type="subcellular location">
    <subcellularLocation>
        <location evidence="3">Mitochondrion inner membrane</location>
        <topology evidence="3">Multi-pass membrane protein</topology>
    </subcellularLocation>
</comment>
<comment type="similarity">
    <text evidence="3">Belongs to the MTFP1 family.</text>
</comment>
<evidence type="ECO:0000250" key="1"/>
<evidence type="ECO:0000255" key="2"/>
<evidence type="ECO:0000305" key="3"/>
<evidence type="ECO:0007744" key="4">
    <source>
    </source>
</evidence>